<reference key="1">
    <citation type="journal article" date="1990" name="Nucleic Acids Res.">
        <title>Nucleotide sequence of the F1-ATPase alpha subunit gene of sunflower mitochondria.</title>
        <authorList>
            <person name="Koehler R.H."/>
            <person name="Loessel A."/>
            <person name="Zetsche K."/>
        </authorList>
    </citation>
    <scope>NUCLEOTIDE SEQUENCE [GENOMIC DNA]</scope>
    <source>
        <strain>cv. Baso</strain>
    </source>
</reference>
<reference key="2">
    <citation type="journal article" date="1990" name="Nucleic Acids Res.">
        <title>Minor differences in the primary structures of atpA genes coded on the mtDNA of fertile and male sterile sunflower lines.</title>
        <authorList>
            <person name="Siculella L."/>
            <person name="D'Ambrosio L."/>
            <person name="de Tuglie A.D."/>
            <person name="Gallerani R."/>
        </authorList>
    </citation>
    <scope>NUCLEOTIDE SEQUENCE [GENOMIC DNA]</scope>
    <source>
        <strain>cv. CMS89</strain>
        <strain>cv. HA89</strain>
    </source>
</reference>
<reference key="3">
    <citation type="journal article" date="1991" name="Mol. Gen. Genet.">
        <title>Cytoplasmic male sterility in sunflower is correlated with the co-transcription of a new open reading frame with the atpA gene.</title>
        <authorList>
            <person name="Koehler R.H."/>
            <person name="Horn R."/>
            <person name="Loessl A."/>
            <person name="Zetsche K."/>
        </authorList>
    </citation>
    <scope>NUCLEOTIDE SEQUENCE [GENOMIC DNA]</scope>
</reference>
<reference key="4">
    <citation type="journal article" date="1994" name="Plant Mol. Biol.">
        <title>Characterisation and expression of the mitochondrial genome of a new type of cytoplasmic male-sterile sunflower.</title>
        <authorList>
            <person name="Spassova M."/>
            <person name="Moneger F."/>
            <person name="Leaver C.J."/>
            <person name="Petrov P."/>
            <person name="Atanassov A."/>
            <person name="Nijkamp H.J.J."/>
            <person name="Hille J."/>
        </authorList>
    </citation>
    <scope>NUCLEOTIDE SEQUENCE [GENOMIC DNA] OF 293-510</scope>
    <source>
        <strain>cv. Texanus ANT1</strain>
    </source>
</reference>
<gene>
    <name type="primary">ATPA</name>
</gene>
<feature type="chain" id="PRO_0000144399" description="ATP synthase subunit alpha, mitochondrial">
    <location>
        <begin position="1"/>
        <end position="510"/>
    </location>
</feature>
<feature type="binding site" evidence="1">
    <location>
        <begin position="171"/>
        <end position="178"/>
    </location>
    <ligand>
        <name>ATP</name>
        <dbReference type="ChEBI" id="CHEBI:30616"/>
    </ligand>
</feature>
<feature type="site" description="Required for activity" evidence="1">
    <location>
        <position position="373"/>
    </location>
</feature>
<feature type="sequence variant" description="In strain: cv. CMS89.">
    <original>A</original>
    <variation>L</variation>
    <location>
        <position position="228"/>
    </location>
</feature>
<sequence length="510" mass="55487">MEFSPRAAELTTLLESRISNFYTNFQVDEIGRVVSVGDGIARVYGLNEIQAGEMVEFASGVKGIALNLENENVGIVVFGSDTAIKEGDLVKRTGSIVDVPAGKAMLGRVVDALGVPIDGRGALSDHERRRVEVKAPGIIERKSVHEPMQTGLKAVDSLVPIGRGQRELIIGDRQTGKTAIAIDTILNQKQMNSRSTSESETLYCVYVAIGQKRSTVAQLVQILSEANAMEYSILVAATASDPAPLQFLAPYSGCAMGEYFRDNGMHALIIYDDLSKQAVAYRQMSLLLRRPPGREAFPGDVFYLHSRLLERAAKRSDQTGAGSLTALPVIETQAGDVSAYIPTNVIPITDGQICSETELFYRGIRPAINVGLSVSRVGSAAQLKTMKQVCGSSKLELAQYREVAALAQFGSDLDAATQALLNRGARLTEVPKQPQYAPLPIEKQILVIYAAVNGFCDRMPLDRISQYERAILKSIKTELLQSLLEKGGLTNERKMEPDTFLKECALPYTI</sequence>
<evidence type="ECO:0000250" key="1"/>
<evidence type="ECO:0000305" key="2"/>
<organism>
    <name type="scientific">Helianthus annuus</name>
    <name type="common">Common sunflower</name>
    <dbReference type="NCBI Taxonomy" id="4232"/>
    <lineage>
        <taxon>Eukaryota</taxon>
        <taxon>Viridiplantae</taxon>
        <taxon>Streptophyta</taxon>
        <taxon>Embryophyta</taxon>
        <taxon>Tracheophyta</taxon>
        <taxon>Spermatophyta</taxon>
        <taxon>Magnoliopsida</taxon>
        <taxon>eudicotyledons</taxon>
        <taxon>Gunneridae</taxon>
        <taxon>Pentapetalae</taxon>
        <taxon>asterids</taxon>
        <taxon>campanulids</taxon>
        <taxon>Asterales</taxon>
        <taxon>Asteraceae</taxon>
        <taxon>Asteroideae</taxon>
        <taxon>Heliantheae alliance</taxon>
        <taxon>Heliantheae</taxon>
        <taxon>Helianthus</taxon>
    </lineage>
</organism>
<geneLocation type="mitochondrion"/>
<protein>
    <recommendedName>
        <fullName>ATP synthase subunit alpha, mitochondrial</fullName>
    </recommendedName>
</protein>
<name>ATPAM_HELAN</name>
<proteinExistence type="inferred from homology"/>
<accession>P18260</accession>
<keyword id="KW-0066">ATP synthesis</keyword>
<keyword id="KW-0067">ATP-binding</keyword>
<keyword id="KW-0139">CF(1)</keyword>
<keyword id="KW-0375">Hydrogen ion transport</keyword>
<keyword id="KW-0406">Ion transport</keyword>
<keyword id="KW-0472">Membrane</keyword>
<keyword id="KW-0496">Mitochondrion</keyword>
<keyword id="KW-0999">Mitochondrion inner membrane</keyword>
<keyword id="KW-0547">Nucleotide-binding</keyword>
<keyword id="KW-0813">Transport</keyword>
<comment type="function">
    <text evidence="1">Mitochondrial membrane ATP synthase (F(1)F(0) ATP synthase or Complex V) produces ATP from ADP in the presence of a proton gradient across the membrane which is generated by electron transport complexes of the respiratory chain. F-type ATPases consist of two structural domains, F(1) - containing the extramembraneous catalytic core, and F(0) - containing the membrane proton channel, linked together by a central stalk and a peripheral stalk. During catalysis, ATP synthesis in the catalytic domain of F(1) is coupled via a rotary mechanism of the central stalk subunits to proton translocation. Subunits alpha and beta form the catalytic core in F(1). Rotation of the central stalk against the surrounding alpha(3)beta(3) subunits leads to hydrolysis of ATP in three separate catalytic sites on the beta subunits. Subunit alpha does not bear the catalytic high-affinity ATP-binding sites (By similarity).</text>
</comment>
<comment type="subunit">
    <text>F-type ATPases have 2 components, CF(1) - the catalytic core - and CF(0) - the membrane proton channel. CF(1) has five subunits: alpha(3), beta(3), gamma(1), delta(1), epsilon(1). CF(0) has three main subunits: a, b and c.</text>
</comment>
<comment type="subcellular location">
    <subcellularLocation>
        <location>Mitochondrion</location>
    </subcellularLocation>
    <subcellularLocation>
        <location>Mitochondrion inner membrane</location>
    </subcellularLocation>
    <text>Peripheral membrane protein.</text>
</comment>
<comment type="similarity">
    <text evidence="2">Belongs to the ATPase alpha/beta chains family.</text>
</comment>
<dbReference type="EMBL" id="X53537">
    <property type="protein sequence ID" value="CAA37613.1"/>
    <property type="molecule type" value="Genomic_DNA"/>
</dbReference>
<dbReference type="EMBL" id="X52838">
    <property type="protein sequence ID" value="CAA37022.1"/>
    <property type="molecule type" value="Genomic_DNA"/>
</dbReference>
<dbReference type="EMBL" id="X55963">
    <property type="protein sequence ID" value="CAA39428.1"/>
    <property type="molecule type" value="Genomic_DNA"/>
</dbReference>
<dbReference type="EMBL" id="X82386">
    <property type="protein sequence ID" value="CAA57786.1"/>
    <property type="molecule type" value="Genomic_DNA"/>
</dbReference>
<dbReference type="PIR" id="S10997">
    <property type="entry name" value="S10997"/>
</dbReference>
<dbReference type="PIR" id="S19261">
    <property type="entry name" value="S19261"/>
</dbReference>
<dbReference type="SMR" id="P18260"/>
<dbReference type="EnsemblPlants" id="mRNA:HanXRQr2_Chr14g0628421">
    <property type="protein sequence ID" value="CDS:HanXRQr2_Chr14g0628421.1"/>
    <property type="gene ID" value="HanXRQr2_Chr14g0628421"/>
</dbReference>
<dbReference type="Gramene" id="mRNA:HanXRQr2_Chr14g0628421">
    <property type="protein sequence ID" value="CDS:HanXRQr2_Chr14g0628421.1"/>
    <property type="gene ID" value="HanXRQr2_Chr14g0628421"/>
</dbReference>
<dbReference type="KEGG" id="han:18250974"/>
<dbReference type="OMA" id="INQRDNW"/>
<dbReference type="OrthoDB" id="30023at2759"/>
<dbReference type="PhylomeDB" id="P18260"/>
<dbReference type="GO" id="GO:0005743">
    <property type="term" value="C:mitochondrial inner membrane"/>
    <property type="evidence" value="ECO:0007669"/>
    <property type="project" value="UniProtKB-SubCell"/>
</dbReference>
<dbReference type="GO" id="GO:0045259">
    <property type="term" value="C:proton-transporting ATP synthase complex"/>
    <property type="evidence" value="ECO:0007669"/>
    <property type="project" value="UniProtKB-KW"/>
</dbReference>
<dbReference type="GO" id="GO:0005524">
    <property type="term" value="F:ATP binding"/>
    <property type="evidence" value="ECO:0007669"/>
    <property type="project" value="UniProtKB-KW"/>
</dbReference>
<dbReference type="GO" id="GO:0046933">
    <property type="term" value="F:proton-transporting ATP synthase activity, rotational mechanism"/>
    <property type="evidence" value="ECO:0007669"/>
    <property type="project" value="InterPro"/>
</dbReference>
<dbReference type="CDD" id="cd18113">
    <property type="entry name" value="ATP-synt_F1_alpha_C"/>
    <property type="match status" value="1"/>
</dbReference>
<dbReference type="CDD" id="cd18116">
    <property type="entry name" value="ATP-synt_F1_alpha_N"/>
    <property type="match status" value="1"/>
</dbReference>
<dbReference type="CDD" id="cd01132">
    <property type="entry name" value="F1-ATPase_alpha_CD"/>
    <property type="match status" value="1"/>
</dbReference>
<dbReference type="FunFam" id="1.20.150.20:FF:000001">
    <property type="entry name" value="ATP synthase subunit alpha"/>
    <property type="match status" value="1"/>
</dbReference>
<dbReference type="FunFam" id="2.40.30.20:FF:000001">
    <property type="entry name" value="ATP synthase subunit alpha"/>
    <property type="match status" value="1"/>
</dbReference>
<dbReference type="FunFam" id="3.40.50.300:FF:002432">
    <property type="entry name" value="ATP synthase subunit alpha, mitochondrial"/>
    <property type="match status" value="1"/>
</dbReference>
<dbReference type="Gene3D" id="2.40.30.20">
    <property type="match status" value="1"/>
</dbReference>
<dbReference type="Gene3D" id="1.20.150.20">
    <property type="entry name" value="ATP synthase alpha/beta chain, C-terminal domain"/>
    <property type="match status" value="1"/>
</dbReference>
<dbReference type="Gene3D" id="3.40.50.300">
    <property type="entry name" value="P-loop containing nucleotide triphosphate hydrolases"/>
    <property type="match status" value="1"/>
</dbReference>
<dbReference type="HAMAP" id="MF_01346">
    <property type="entry name" value="ATP_synth_alpha_bact"/>
    <property type="match status" value="1"/>
</dbReference>
<dbReference type="InterPro" id="IPR023366">
    <property type="entry name" value="ATP_synth_asu-like_sf"/>
</dbReference>
<dbReference type="InterPro" id="IPR000793">
    <property type="entry name" value="ATP_synth_asu_C"/>
</dbReference>
<dbReference type="InterPro" id="IPR038376">
    <property type="entry name" value="ATP_synth_asu_C_sf"/>
</dbReference>
<dbReference type="InterPro" id="IPR033732">
    <property type="entry name" value="ATP_synth_F1_a_nt-bd_dom"/>
</dbReference>
<dbReference type="InterPro" id="IPR005294">
    <property type="entry name" value="ATP_synth_F1_asu"/>
</dbReference>
<dbReference type="InterPro" id="IPR020003">
    <property type="entry name" value="ATPase_a/bsu_AS"/>
</dbReference>
<dbReference type="InterPro" id="IPR004100">
    <property type="entry name" value="ATPase_F1/V1/A1_a/bsu_N"/>
</dbReference>
<dbReference type="InterPro" id="IPR036121">
    <property type="entry name" value="ATPase_F1/V1/A1_a/bsu_N_sf"/>
</dbReference>
<dbReference type="InterPro" id="IPR000194">
    <property type="entry name" value="ATPase_F1/V1/A1_a/bsu_nucl-bd"/>
</dbReference>
<dbReference type="InterPro" id="IPR027417">
    <property type="entry name" value="P-loop_NTPase"/>
</dbReference>
<dbReference type="NCBIfam" id="TIGR00962">
    <property type="entry name" value="atpA"/>
    <property type="match status" value="1"/>
</dbReference>
<dbReference type="NCBIfam" id="NF009884">
    <property type="entry name" value="PRK13343.1"/>
    <property type="match status" value="1"/>
</dbReference>
<dbReference type="PANTHER" id="PTHR48082">
    <property type="entry name" value="ATP SYNTHASE SUBUNIT ALPHA, MITOCHONDRIAL"/>
    <property type="match status" value="1"/>
</dbReference>
<dbReference type="PANTHER" id="PTHR48082:SF2">
    <property type="entry name" value="ATP SYNTHASE SUBUNIT ALPHA, MITOCHONDRIAL"/>
    <property type="match status" value="1"/>
</dbReference>
<dbReference type="Pfam" id="PF00006">
    <property type="entry name" value="ATP-synt_ab"/>
    <property type="match status" value="1"/>
</dbReference>
<dbReference type="Pfam" id="PF00306">
    <property type="entry name" value="ATP-synt_ab_C"/>
    <property type="match status" value="1"/>
</dbReference>
<dbReference type="Pfam" id="PF02874">
    <property type="entry name" value="ATP-synt_ab_N"/>
    <property type="match status" value="1"/>
</dbReference>
<dbReference type="PIRSF" id="PIRSF039088">
    <property type="entry name" value="F_ATPase_subunit_alpha"/>
    <property type="match status" value="1"/>
</dbReference>
<dbReference type="SUPFAM" id="SSF47917">
    <property type="entry name" value="C-terminal domain of alpha and beta subunits of F1 ATP synthase"/>
    <property type="match status" value="1"/>
</dbReference>
<dbReference type="SUPFAM" id="SSF50615">
    <property type="entry name" value="N-terminal domain of alpha and beta subunits of F1 ATP synthase"/>
    <property type="match status" value="1"/>
</dbReference>
<dbReference type="SUPFAM" id="SSF52540">
    <property type="entry name" value="P-loop containing nucleoside triphosphate hydrolases"/>
    <property type="match status" value="1"/>
</dbReference>
<dbReference type="PROSITE" id="PS00152">
    <property type="entry name" value="ATPASE_ALPHA_BETA"/>
    <property type="match status" value="1"/>
</dbReference>